<proteinExistence type="inferred from homology"/>
<name>COBT_SHEB2</name>
<keyword id="KW-0169">Cobalamin biosynthesis</keyword>
<keyword id="KW-0328">Glycosyltransferase</keyword>
<keyword id="KW-0808">Transferase</keyword>
<reference key="1">
    <citation type="submission" date="2008-12" db="EMBL/GenBank/DDBJ databases">
        <title>Complete sequence of chromosome of Shewanella baltica OS223.</title>
        <authorList>
            <consortium name="US DOE Joint Genome Institute"/>
            <person name="Lucas S."/>
            <person name="Copeland A."/>
            <person name="Lapidus A."/>
            <person name="Glavina del Rio T."/>
            <person name="Dalin E."/>
            <person name="Tice H."/>
            <person name="Bruce D."/>
            <person name="Goodwin L."/>
            <person name="Pitluck S."/>
            <person name="Chertkov O."/>
            <person name="Meincke L."/>
            <person name="Brettin T."/>
            <person name="Detter J.C."/>
            <person name="Han C."/>
            <person name="Kuske C.R."/>
            <person name="Larimer F."/>
            <person name="Land M."/>
            <person name="Hauser L."/>
            <person name="Kyrpides N."/>
            <person name="Ovchinnikova G."/>
            <person name="Brettar I."/>
            <person name="Rodrigues J."/>
            <person name="Konstantinidis K."/>
            <person name="Tiedje J."/>
        </authorList>
    </citation>
    <scope>NUCLEOTIDE SEQUENCE [LARGE SCALE GENOMIC DNA]</scope>
    <source>
        <strain>OS223</strain>
    </source>
</reference>
<accession>B8E4M8</accession>
<feature type="chain" id="PRO_1000125114" description="Nicotinate-nucleotide--dimethylbenzimidazole phosphoribosyltransferase">
    <location>
        <begin position="1"/>
        <end position="360"/>
    </location>
</feature>
<feature type="active site" description="Proton acceptor" evidence="1">
    <location>
        <position position="327"/>
    </location>
</feature>
<organism>
    <name type="scientific">Shewanella baltica (strain OS223)</name>
    <dbReference type="NCBI Taxonomy" id="407976"/>
    <lineage>
        <taxon>Bacteria</taxon>
        <taxon>Pseudomonadati</taxon>
        <taxon>Pseudomonadota</taxon>
        <taxon>Gammaproteobacteria</taxon>
        <taxon>Alteromonadales</taxon>
        <taxon>Shewanellaceae</taxon>
        <taxon>Shewanella</taxon>
    </lineage>
</organism>
<dbReference type="EC" id="2.4.2.21" evidence="1"/>
<dbReference type="EMBL" id="CP001252">
    <property type="protein sequence ID" value="ACK45514.1"/>
    <property type="molecule type" value="Genomic_DNA"/>
</dbReference>
<dbReference type="RefSeq" id="WP_012586951.1">
    <property type="nucleotide sequence ID" value="NC_011663.1"/>
</dbReference>
<dbReference type="SMR" id="B8E4M8"/>
<dbReference type="KEGG" id="sbp:Sbal223_0999"/>
<dbReference type="HOGENOM" id="CLU_002982_0_0_6"/>
<dbReference type="UniPathway" id="UPA00061">
    <property type="reaction ID" value="UER00516"/>
</dbReference>
<dbReference type="Proteomes" id="UP000002507">
    <property type="component" value="Chromosome"/>
</dbReference>
<dbReference type="GO" id="GO:0008939">
    <property type="term" value="F:nicotinate-nucleotide-dimethylbenzimidazole phosphoribosyltransferase activity"/>
    <property type="evidence" value="ECO:0007669"/>
    <property type="project" value="UniProtKB-UniRule"/>
</dbReference>
<dbReference type="GO" id="GO:0009236">
    <property type="term" value="P:cobalamin biosynthetic process"/>
    <property type="evidence" value="ECO:0007669"/>
    <property type="project" value="UniProtKB-KW"/>
</dbReference>
<dbReference type="CDD" id="cd02439">
    <property type="entry name" value="DMB-PRT_CobT"/>
    <property type="match status" value="1"/>
</dbReference>
<dbReference type="FunFam" id="3.40.50.10210:FF:000001">
    <property type="entry name" value="Nicotinate-nucleotide--dimethylbenzimidazole phosphoribosyltransferase"/>
    <property type="match status" value="1"/>
</dbReference>
<dbReference type="Gene3D" id="1.10.1610.10">
    <property type="match status" value="1"/>
</dbReference>
<dbReference type="Gene3D" id="3.40.50.10210">
    <property type="match status" value="1"/>
</dbReference>
<dbReference type="HAMAP" id="MF_00230">
    <property type="entry name" value="CobT"/>
    <property type="match status" value="1"/>
</dbReference>
<dbReference type="InterPro" id="IPR003200">
    <property type="entry name" value="Nict_dMeBzImd_PRibTrfase"/>
</dbReference>
<dbReference type="InterPro" id="IPR017846">
    <property type="entry name" value="Nict_dMeBzImd_PRibTrfase_bact"/>
</dbReference>
<dbReference type="InterPro" id="IPR023195">
    <property type="entry name" value="Nict_dMeBzImd_PRibTrfase_N"/>
</dbReference>
<dbReference type="InterPro" id="IPR036087">
    <property type="entry name" value="Nict_dMeBzImd_PRibTrfase_sf"/>
</dbReference>
<dbReference type="NCBIfam" id="TIGR03160">
    <property type="entry name" value="cobT_DBIPRT"/>
    <property type="match status" value="1"/>
</dbReference>
<dbReference type="NCBIfam" id="NF000996">
    <property type="entry name" value="PRK00105.1"/>
    <property type="match status" value="1"/>
</dbReference>
<dbReference type="PANTHER" id="PTHR43463">
    <property type="entry name" value="NICOTINATE-NUCLEOTIDE--DIMETHYLBENZIMIDAZOLE PHOSPHORIBOSYLTRANSFERASE"/>
    <property type="match status" value="1"/>
</dbReference>
<dbReference type="PANTHER" id="PTHR43463:SF1">
    <property type="entry name" value="NICOTINATE-NUCLEOTIDE--DIMETHYLBENZIMIDAZOLE PHOSPHORIBOSYLTRANSFERASE"/>
    <property type="match status" value="1"/>
</dbReference>
<dbReference type="Pfam" id="PF02277">
    <property type="entry name" value="DBI_PRT"/>
    <property type="match status" value="1"/>
</dbReference>
<dbReference type="SUPFAM" id="SSF52733">
    <property type="entry name" value="Nicotinate mononucleotide:5,6-dimethylbenzimidazole phosphoribosyltransferase (CobT)"/>
    <property type="match status" value="1"/>
</dbReference>
<sequence>MSQSAVSFQISPVSKTQDPLIQQKIDLKTKPPGALGQLESLALQIARVQATDSQQTDQPQNTVLKIVHPTMLVFAGDHGIAAEGVSIAPSEVTRQMVQNFAHGGAAINVFCRQVGFTLEVIDCGILTPVEGVEGIIDQRLGAGTGAIHLEPAMALETVDKGFAMARDLIERHHQAGCNLVAFGEMGIGNTSAAAAIMAAIMQLDVIDCVGRGTGINSETLERKLMLIELALLLHQSALTGPKSVLACLGGFEIVQMTGAMLAAAERKMLVVVDGFIATAAALVAVQIAPNVRDYLIFAHQSDEQGHQRMLEFLQAKPLLSLGLRLGEGTGAALALPLIQASVNFYNQMASFSDAGIEAVV</sequence>
<comment type="function">
    <text evidence="1">Catalyzes the synthesis of alpha-ribazole-5'-phosphate from nicotinate mononucleotide (NAMN) and 5,6-dimethylbenzimidazole (DMB).</text>
</comment>
<comment type="catalytic activity">
    <reaction evidence="1">
        <text>5,6-dimethylbenzimidazole + nicotinate beta-D-ribonucleotide = alpha-ribazole 5'-phosphate + nicotinate + H(+)</text>
        <dbReference type="Rhea" id="RHEA:11196"/>
        <dbReference type="ChEBI" id="CHEBI:15378"/>
        <dbReference type="ChEBI" id="CHEBI:15890"/>
        <dbReference type="ChEBI" id="CHEBI:32544"/>
        <dbReference type="ChEBI" id="CHEBI:57502"/>
        <dbReference type="ChEBI" id="CHEBI:57918"/>
        <dbReference type="EC" id="2.4.2.21"/>
    </reaction>
</comment>
<comment type="pathway">
    <text evidence="1">Nucleoside biosynthesis; alpha-ribazole biosynthesis; alpha-ribazole from 5,6-dimethylbenzimidazole: step 1/2.</text>
</comment>
<comment type="similarity">
    <text evidence="1">Belongs to the CobT family.</text>
</comment>
<protein>
    <recommendedName>
        <fullName evidence="1">Nicotinate-nucleotide--dimethylbenzimidazole phosphoribosyltransferase</fullName>
        <shortName evidence="1">NN:DBI PRT</shortName>
        <ecNumber evidence="1">2.4.2.21</ecNumber>
    </recommendedName>
    <alternativeName>
        <fullName evidence="1">N(1)-alpha-phosphoribosyltransferase</fullName>
    </alternativeName>
</protein>
<evidence type="ECO:0000255" key="1">
    <source>
        <dbReference type="HAMAP-Rule" id="MF_00230"/>
    </source>
</evidence>
<gene>
    <name evidence="1" type="primary">cobT</name>
    <name type="ordered locus">Sbal223_0999</name>
</gene>